<evidence type="ECO:0000255" key="1">
    <source>
        <dbReference type="HAMAP-Rule" id="MF_00362"/>
    </source>
</evidence>
<evidence type="ECO:0000305" key="2"/>
<feature type="chain" id="PRO_1000120926" description="Large ribosomal subunit protein uL10">
    <location>
        <begin position="1"/>
        <end position="172"/>
    </location>
</feature>
<dbReference type="EMBL" id="CP000887">
    <property type="protein sequence ID" value="ACD72686.1"/>
    <property type="molecule type" value="Genomic_DNA"/>
</dbReference>
<dbReference type="RefSeq" id="WP_002964372.1">
    <property type="nucleotide sequence ID" value="NC_010742.1"/>
</dbReference>
<dbReference type="SMR" id="B2S689"/>
<dbReference type="GeneID" id="93016430"/>
<dbReference type="KEGG" id="bmc:BAbS19_I11810"/>
<dbReference type="HOGENOM" id="CLU_092227_0_0_5"/>
<dbReference type="Proteomes" id="UP000002565">
    <property type="component" value="Chromosome 1"/>
</dbReference>
<dbReference type="GO" id="GO:0015934">
    <property type="term" value="C:large ribosomal subunit"/>
    <property type="evidence" value="ECO:0007669"/>
    <property type="project" value="InterPro"/>
</dbReference>
<dbReference type="GO" id="GO:0070180">
    <property type="term" value="F:large ribosomal subunit rRNA binding"/>
    <property type="evidence" value="ECO:0007669"/>
    <property type="project" value="UniProtKB-UniRule"/>
</dbReference>
<dbReference type="GO" id="GO:0003735">
    <property type="term" value="F:structural constituent of ribosome"/>
    <property type="evidence" value="ECO:0007669"/>
    <property type="project" value="InterPro"/>
</dbReference>
<dbReference type="GO" id="GO:0006412">
    <property type="term" value="P:translation"/>
    <property type="evidence" value="ECO:0007669"/>
    <property type="project" value="UniProtKB-UniRule"/>
</dbReference>
<dbReference type="CDD" id="cd05797">
    <property type="entry name" value="Ribosomal_L10"/>
    <property type="match status" value="1"/>
</dbReference>
<dbReference type="Gene3D" id="3.30.70.1730">
    <property type="match status" value="1"/>
</dbReference>
<dbReference type="Gene3D" id="6.10.250.290">
    <property type="match status" value="1"/>
</dbReference>
<dbReference type="HAMAP" id="MF_00362">
    <property type="entry name" value="Ribosomal_uL10"/>
    <property type="match status" value="1"/>
</dbReference>
<dbReference type="InterPro" id="IPR001790">
    <property type="entry name" value="Ribosomal_uL10"/>
</dbReference>
<dbReference type="InterPro" id="IPR043141">
    <property type="entry name" value="Ribosomal_uL10-like_sf"/>
</dbReference>
<dbReference type="InterPro" id="IPR022973">
    <property type="entry name" value="Ribosomal_uL10_bac"/>
</dbReference>
<dbReference type="InterPro" id="IPR047865">
    <property type="entry name" value="Ribosomal_uL10_bac_type"/>
</dbReference>
<dbReference type="InterPro" id="IPR002363">
    <property type="entry name" value="Ribosomal_uL10_CS_bac"/>
</dbReference>
<dbReference type="NCBIfam" id="NF000955">
    <property type="entry name" value="PRK00099.1-1"/>
    <property type="match status" value="1"/>
</dbReference>
<dbReference type="PANTHER" id="PTHR11560">
    <property type="entry name" value="39S RIBOSOMAL PROTEIN L10, MITOCHONDRIAL"/>
    <property type="match status" value="1"/>
</dbReference>
<dbReference type="Pfam" id="PF00466">
    <property type="entry name" value="Ribosomal_L10"/>
    <property type="match status" value="1"/>
</dbReference>
<dbReference type="SUPFAM" id="SSF160369">
    <property type="entry name" value="Ribosomal protein L10-like"/>
    <property type="match status" value="1"/>
</dbReference>
<dbReference type="PROSITE" id="PS01109">
    <property type="entry name" value="RIBOSOMAL_L10"/>
    <property type="match status" value="1"/>
</dbReference>
<sequence length="172" mass="17945">MDRAEKREFVAWLNGAFKESGSVVVAHYTGLTVAQMSDLRSKMRDAGGSVKVAKNRLAKIALQGTESEGIADLFTGQTVVAYANDPITAPKVAVEFAKANDKLVILGGAMGATTLNADGVKSLASLPSLDELRAKLVGMIQTPAQRLAVLTSAPAGQIARVIGAHARKNEAA</sequence>
<protein>
    <recommendedName>
        <fullName evidence="1">Large ribosomal subunit protein uL10</fullName>
    </recommendedName>
    <alternativeName>
        <fullName evidence="2">50S ribosomal protein L10</fullName>
    </alternativeName>
</protein>
<reference key="1">
    <citation type="journal article" date="2008" name="PLoS ONE">
        <title>Genome sequence of Brucella abortus vaccine strain S19 compared to virulent strains yields candidate virulence genes.</title>
        <authorList>
            <person name="Crasta O.R."/>
            <person name="Folkerts O."/>
            <person name="Fei Z."/>
            <person name="Mane S.P."/>
            <person name="Evans C."/>
            <person name="Martino-Catt S."/>
            <person name="Bricker B."/>
            <person name="Yu G."/>
            <person name="Du L."/>
            <person name="Sobral B.W."/>
        </authorList>
    </citation>
    <scope>NUCLEOTIDE SEQUENCE [LARGE SCALE GENOMIC DNA]</scope>
    <source>
        <strain>S19</strain>
    </source>
</reference>
<accession>B2S689</accession>
<proteinExistence type="inferred from homology"/>
<keyword id="KW-0687">Ribonucleoprotein</keyword>
<keyword id="KW-0689">Ribosomal protein</keyword>
<keyword id="KW-0694">RNA-binding</keyword>
<keyword id="KW-0699">rRNA-binding</keyword>
<name>RL10_BRUA1</name>
<organism>
    <name type="scientific">Brucella abortus (strain S19)</name>
    <dbReference type="NCBI Taxonomy" id="430066"/>
    <lineage>
        <taxon>Bacteria</taxon>
        <taxon>Pseudomonadati</taxon>
        <taxon>Pseudomonadota</taxon>
        <taxon>Alphaproteobacteria</taxon>
        <taxon>Hyphomicrobiales</taxon>
        <taxon>Brucellaceae</taxon>
        <taxon>Brucella/Ochrobactrum group</taxon>
        <taxon>Brucella</taxon>
    </lineage>
</organism>
<gene>
    <name evidence="1" type="primary">rplJ</name>
    <name type="ordered locus">BAbS19_I11810</name>
</gene>
<comment type="function">
    <text evidence="1">Forms part of the ribosomal stalk, playing a central role in the interaction of the ribosome with GTP-bound translation factors.</text>
</comment>
<comment type="subunit">
    <text evidence="1">Part of the ribosomal stalk of the 50S ribosomal subunit. The N-terminus interacts with L11 and the large rRNA to form the base of the stalk. The C-terminus forms an elongated spine to which L12 dimers bind in a sequential fashion forming a multimeric L10(L12)X complex.</text>
</comment>
<comment type="similarity">
    <text evidence="1">Belongs to the universal ribosomal protein uL10 family.</text>
</comment>